<gene>
    <name type="ordered locus">Pmen_0867</name>
</gene>
<proteinExistence type="inferred from homology"/>
<organism>
    <name type="scientific">Ectopseudomonas mendocina (strain ymp)</name>
    <name type="common">Pseudomonas mendocina</name>
    <dbReference type="NCBI Taxonomy" id="399739"/>
    <lineage>
        <taxon>Bacteria</taxon>
        <taxon>Pseudomonadati</taxon>
        <taxon>Pseudomonadota</taxon>
        <taxon>Gammaproteobacteria</taxon>
        <taxon>Pseudomonadales</taxon>
        <taxon>Pseudomonadaceae</taxon>
        <taxon>Ectopseudomonas</taxon>
    </lineage>
</organism>
<accession>A4XQL9</accession>
<evidence type="ECO:0000255" key="1">
    <source>
        <dbReference type="HAMAP-Rule" id="MF_00636"/>
    </source>
</evidence>
<protein>
    <recommendedName>
        <fullName evidence="1">Nucleotide-binding protein Pmen_0867</fullName>
    </recommendedName>
</protein>
<reference key="1">
    <citation type="submission" date="2007-04" db="EMBL/GenBank/DDBJ databases">
        <title>Complete sequence of Pseudomonas mendocina ymp.</title>
        <authorList>
            <consortium name="US DOE Joint Genome Institute"/>
            <person name="Copeland A."/>
            <person name="Lucas S."/>
            <person name="Lapidus A."/>
            <person name="Barry K."/>
            <person name="Glavina del Rio T."/>
            <person name="Dalin E."/>
            <person name="Tice H."/>
            <person name="Pitluck S."/>
            <person name="Kiss H."/>
            <person name="Brettin T."/>
            <person name="Detter J.C."/>
            <person name="Bruce D."/>
            <person name="Han C."/>
            <person name="Schmutz J."/>
            <person name="Larimer F."/>
            <person name="Land M."/>
            <person name="Hauser L."/>
            <person name="Kyrpides N."/>
            <person name="Mikhailova N."/>
            <person name="Hersman L."/>
            <person name="Dubois J."/>
            <person name="Maurice P."/>
            <person name="Richardson P."/>
        </authorList>
    </citation>
    <scope>NUCLEOTIDE SEQUENCE [LARGE SCALE GENOMIC DNA]</scope>
    <source>
        <strain>ymp</strain>
    </source>
</reference>
<sequence length="285" mass="32452">MRLIIVSGRSGSGKSTALDVLEDNGFYCIDNLPAGLLPDLAERALLNTEMLLPQVAVSIDARNLQSHLRRFPELLEQVRQRNIRCDILYLDADDETLLKRFSETRRRHPLTDENRSLAEAIADETQVLAPIVDLADLKIDTTHLNLYQLRDSLKLRLLNQPEPGTAFLFESFGFKRGMPVDADLVFDARCLPNPYWKPELRDFSGLQQPVIDYLAAQPEVEEMYQDILAYLEKWLPRFAASNRAYVTIAIGCTGGHHRSVYLANRLSQALKKPLKNVQVRHRDLS</sequence>
<dbReference type="EMBL" id="CP000680">
    <property type="protein sequence ID" value="ABP83635.1"/>
    <property type="molecule type" value="Genomic_DNA"/>
</dbReference>
<dbReference type="SMR" id="A4XQL9"/>
<dbReference type="STRING" id="399739.Pmen_0867"/>
<dbReference type="KEGG" id="pmy:Pmen_0867"/>
<dbReference type="PATRIC" id="fig|399739.8.peg.876"/>
<dbReference type="eggNOG" id="COG1660">
    <property type="taxonomic scope" value="Bacteria"/>
</dbReference>
<dbReference type="HOGENOM" id="CLU_059558_1_1_6"/>
<dbReference type="OrthoDB" id="9784461at2"/>
<dbReference type="GO" id="GO:0005524">
    <property type="term" value="F:ATP binding"/>
    <property type="evidence" value="ECO:0007669"/>
    <property type="project" value="UniProtKB-UniRule"/>
</dbReference>
<dbReference type="GO" id="GO:0005525">
    <property type="term" value="F:GTP binding"/>
    <property type="evidence" value="ECO:0007669"/>
    <property type="project" value="UniProtKB-UniRule"/>
</dbReference>
<dbReference type="Gene3D" id="3.40.50.300">
    <property type="entry name" value="P-loop containing nucleotide triphosphate hydrolases"/>
    <property type="match status" value="1"/>
</dbReference>
<dbReference type="HAMAP" id="MF_00636">
    <property type="entry name" value="RapZ_like"/>
    <property type="match status" value="1"/>
</dbReference>
<dbReference type="InterPro" id="IPR027417">
    <property type="entry name" value="P-loop_NTPase"/>
</dbReference>
<dbReference type="InterPro" id="IPR005337">
    <property type="entry name" value="RapZ-like"/>
</dbReference>
<dbReference type="InterPro" id="IPR053930">
    <property type="entry name" value="RapZ-like_N"/>
</dbReference>
<dbReference type="InterPro" id="IPR053931">
    <property type="entry name" value="RapZ_C"/>
</dbReference>
<dbReference type="NCBIfam" id="NF003828">
    <property type="entry name" value="PRK05416.1"/>
    <property type="match status" value="1"/>
</dbReference>
<dbReference type="PANTHER" id="PTHR30448">
    <property type="entry name" value="RNASE ADAPTER PROTEIN RAPZ"/>
    <property type="match status" value="1"/>
</dbReference>
<dbReference type="PANTHER" id="PTHR30448:SF0">
    <property type="entry name" value="RNASE ADAPTER PROTEIN RAPZ"/>
    <property type="match status" value="1"/>
</dbReference>
<dbReference type="Pfam" id="PF22740">
    <property type="entry name" value="PapZ_C"/>
    <property type="match status" value="1"/>
</dbReference>
<dbReference type="Pfam" id="PF03668">
    <property type="entry name" value="RapZ-like_N"/>
    <property type="match status" value="1"/>
</dbReference>
<dbReference type="PIRSF" id="PIRSF005052">
    <property type="entry name" value="P-loopkin"/>
    <property type="match status" value="1"/>
</dbReference>
<dbReference type="SUPFAM" id="SSF52540">
    <property type="entry name" value="P-loop containing nucleoside triphosphate hydrolases"/>
    <property type="match status" value="1"/>
</dbReference>
<comment type="function">
    <text evidence="1">Displays ATPase and GTPase activities.</text>
</comment>
<comment type="similarity">
    <text evidence="1">Belongs to the RapZ-like family.</text>
</comment>
<feature type="chain" id="PRO_1000061439" description="Nucleotide-binding protein Pmen_0867">
    <location>
        <begin position="1"/>
        <end position="285"/>
    </location>
</feature>
<feature type="binding site" evidence="1">
    <location>
        <begin position="8"/>
        <end position="15"/>
    </location>
    <ligand>
        <name>ATP</name>
        <dbReference type="ChEBI" id="CHEBI:30616"/>
    </ligand>
</feature>
<feature type="binding site" evidence="1">
    <location>
        <begin position="60"/>
        <end position="63"/>
    </location>
    <ligand>
        <name>GTP</name>
        <dbReference type="ChEBI" id="CHEBI:37565"/>
    </ligand>
</feature>
<keyword id="KW-0067">ATP-binding</keyword>
<keyword id="KW-0342">GTP-binding</keyword>
<keyword id="KW-0547">Nucleotide-binding</keyword>
<name>Y867_ECTM1</name>